<organism>
    <name type="scientific">Cupriavidus pinatubonensis (strain JMP 134 / LMG 1197)</name>
    <name type="common">Cupriavidus necator (strain JMP 134)</name>
    <dbReference type="NCBI Taxonomy" id="264198"/>
    <lineage>
        <taxon>Bacteria</taxon>
        <taxon>Pseudomonadati</taxon>
        <taxon>Pseudomonadota</taxon>
        <taxon>Betaproteobacteria</taxon>
        <taxon>Burkholderiales</taxon>
        <taxon>Burkholderiaceae</taxon>
        <taxon>Cupriavidus</taxon>
    </lineage>
</organism>
<reference key="1">
    <citation type="journal article" date="1987" name="J. Bacteriol.">
        <title>Analysis, cloning, and high-level expression of 2,4-dichlorophenoxyacetate monooxygenase gene tfdA of Alcaligenes eutrophus JMP134.</title>
        <authorList>
            <person name="Streber W.R."/>
            <person name="Timmis K.N."/>
            <person name="Zenk M.H."/>
        </authorList>
    </citation>
    <scope>NUCLEOTIDE SEQUENCE [GENOMIC DNA]</scope>
    <source>
        <plasmid>pJP4</plasmid>
    </source>
</reference>
<reference key="2">
    <citation type="journal article" date="2004" name="Environ. Microbiol.">
        <title>Genetic organization of the catabolic plasmid pJP4 from Ralstonia eutropha JMP134 (pJP4) reveals mechanisms of adaptation to chloroaromatic pollutants and evolution of specialized chloroaromatic degradation pathways.</title>
        <authorList>
            <person name="Trefault N."/>
            <person name="De la Iglesia R."/>
            <person name="Molina A.M."/>
            <person name="Manzano M."/>
            <person name="Ledger T."/>
            <person name="Perez-Pantoja D."/>
            <person name="Sanchez M.A."/>
            <person name="Stuardo M."/>
            <person name="Gonzalez B."/>
        </authorList>
    </citation>
    <scope>NUCLEOTIDE SEQUENCE [GENOMIC DNA]</scope>
    <source>
        <plasmid>pJP4</plasmid>
    </source>
</reference>
<reference key="3">
    <citation type="journal article" date="2010" name="Syst. Appl. Microbiol.">
        <title>Comparison of 16S rRNA gene phylogeny and functional tfdA gene distribution in thirty-one different 2,4-dichlorophenoxyacetic acid and 4-chloro-2-methylphenoxyacetic acid degraders.</title>
        <authorList>
            <person name="Baelum J."/>
            <person name="Jacobsen C.S."/>
            <person name="Holben W.E."/>
        </authorList>
    </citation>
    <scope>NUCLEOTIDE SEQUENCE [GENOMIC DNA]</scope>
    <source>
        <strain>JMP134 / LMG 1197</strain>
    </source>
</reference>
<reference key="4">
    <citation type="journal article" date="2010" name="PLoS ONE">
        <title>The complete multipartite genome sequence of Cupriavidus necator JMP134, a versatile pollutant degrader.</title>
        <authorList>
            <person name="Lykidis A."/>
            <person name="Perez-Pantoja D."/>
            <person name="Ledger T."/>
            <person name="Mavromatis K."/>
            <person name="Anderson I.J."/>
            <person name="Ivanova N.N."/>
            <person name="Hooper S.D."/>
            <person name="Lapidus A."/>
            <person name="Lucas S."/>
            <person name="Gonzalez B."/>
            <person name="Kyrpides N.C."/>
        </authorList>
    </citation>
    <scope>NUCLEOTIDE SEQUENCE [LARGE SCALE GENOMIC DNA]</scope>
    <source>
        <strain>JMP134 / LMG 1197</strain>
        <plasmid>pPJ4</plasmid>
    </source>
</reference>
<reference key="5">
    <citation type="journal article" date="2000" name="J. Biol. Chem.">
        <title>Site-directed mutagenesis of 2,4-dichlorophenoxyacetic acid/alpha-ketoglutarate dioxygenase. Identification of residues involved in metallocenter formation and substrate binding.</title>
        <authorList>
            <person name="Hogan D.A."/>
            <person name="Smith S.R."/>
            <person name="Saari E.A."/>
            <person name="McCracken J."/>
            <person name="Hausinger R.P."/>
        </authorList>
    </citation>
    <scope>MUTAGENESIS OF HIS-9; HIS-114; ASP-116; HIS-168; HIS-201; HIS-214; HIS-217; HIS-236; HIS-246 AND HIS-263</scope>
    <source>
        <plasmid>pJP4</plasmid>
    </source>
</reference>
<reference key="6">
    <citation type="journal article" date="2001" name="J. Am. Chem. Soc.">
        <title>Alternative reactivity of an alpha-ketoglutarate-dependent iron(II) oxygenase: enzyme self-hydroxylation.</title>
        <authorList>
            <person name="Liu A."/>
            <person name="Ho R.Y.N."/>
            <person name="Que L. Jr."/>
            <person name="Ryle M.J."/>
            <person name="Phinney B.S."/>
            <person name="Hausinger R.P."/>
        </authorList>
    </citation>
    <scope>HYDROXYLATION AT TRP-113</scope>
    <scope>IDENTIFICATION BY MASS SPECTROMETRY</scope>
    <source>
        <plasmid>pJP4</plasmid>
    </source>
</reference>
<reference key="7">
    <citation type="journal article" date="2002" name="Biochemistry">
        <title>X-ray crystal structure of Escherichia coli taurine/alpha-ketoglutarate dioxygenase complexed to ferrous iron and substrates.</title>
        <authorList>
            <person name="Elkins J.M."/>
            <person name="Ryle M.J."/>
            <person name="Clifton I.J."/>
            <person name="Dunning Hotopp J.C."/>
            <person name="Lloyd J.S."/>
            <person name="Burzlaff N.I."/>
            <person name="Baldwin J.E."/>
            <person name="Hausinger R.P."/>
            <person name="Roach P.L."/>
        </authorList>
    </citation>
    <scope>3D-STRUCTURE MODELING</scope>
    <source>
        <plasmid>pJP4</plasmid>
    </source>
</reference>
<geneLocation type="plasmid">
    <name>pJP4</name>
</geneLocation>
<geneLocation type="plasmid">
    <name>pPJ4</name>
</geneLocation>
<protein>
    <recommendedName>
        <fullName>Alpha-ketoglutarate-dependent 2,4-dichlorophenoxyacetate dioxygenase</fullName>
        <shortName>2,4-D dioxygenase</shortName>
        <ecNumber>1.14.11.-</ecNumber>
    </recommendedName>
</protein>
<keyword id="KW-0058">Aromatic hydrocarbons catabolism</keyword>
<keyword id="KW-0223">Dioxygenase</keyword>
<keyword id="KW-0379">Hydroxylation</keyword>
<keyword id="KW-0408">Iron</keyword>
<keyword id="KW-0479">Metal-binding</keyword>
<keyword id="KW-0560">Oxidoreductase</keyword>
<keyword id="KW-0614">Plasmid</keyword>
<keyword id="KW-0847">Vitamin C</keyword>
<comment type="function">
    <text>Involved in degradation of the herbicide 2,4-dichlorophenoxyacetic acid (2,4-D). Is also able to degrade 2-methyl-4-chlorophenoxyacetic acid and 3-chlorobenzoic acid.</text>
</comment>
<comment type="catalytic activity">
    <reaction>
        <text>(2,4-dichlorophenoxy)acetate + 2-oxoglutarate + O2 = 2,4-dichlorophenol + glyoxylate + succinate + CO2</text>
        <dbReference type="Rhea" id="RHEA:48984"/>
        <dbReference type="ChEBI" id="CHEBI:15379"/>
        <dbReference type="ChEBI" id="CHEBI:16526"/>
        <dbReference type="ChEBI" id="CHEBI:16738"/>
        <dbReference type="ChEBI" id="CHEBI:16810"/>
        <dbReference type="ChEBI" id="CHEBI:19351"/>
        <dbReference type="ChEBI" id="CHEBI:30031"/>
        <dbReference type="ChEBI" id="CHEBI:36655"/>
    </reaction>
</comment>
<comment type="cofactor">
    <cofactor>
        <name>Fe(2+)</name>
        <dbReference type="ChEBI" id="CHEBI:29033"/>
    </cofactor>
    <text>Binds 1 Fe(2+) ion per subunit.</text>
</comment>
<comment type="activity regulation">
    <text evidence="4">Activated by ascorbate.</text>
</comment>
<comment type="pathway">
    <text>Xenobiotic degradation; (2,4-dichlorophenoxy)acetate degradation.</text>
</comment>
<comment type="PTM">
    <text evidence="3">Hydroxylated on Trp-113; inactivates the enzyme.</text>
</comment>
<comment type="similarity">
    <text evidence="4">Belongs to the TfdA dioxygenase family.</text>
</comment>
<accession>P10088</accession>
<accession>B5A9M3</accession>
<accession>Q46M53</accession>
<dbReference type="EC" id="1.14.11.-"/>
<dbReference type="EMBL" id="M16730">
    <property type="protein sequence ID" value="AAA21983.1"/>
    <property type="molecule type" value="Genomic_DNA"/>
</dbReference>
<dbReference type="EMBL" id="AY365053">
    <property type="protein sequence ID" value="AAR31052.1"/>
    <property type="molecule type" value="Genomic_DNA"/>
</dbReference>
<dbReference type="EMBL" id="EU827467">
    <property type="protein sequence ID" value="ACF35494.1"/>
    <property type="molecule type" value="Genomic_DNA"/>
</dbReference>
<dbReference type="EMBL" id="CP000093">
    <property type="protein sequence ID" value="AAZ65777.1"/>
    <property type="molecule type" value="Genomic_DNA"/>
</dbReference>
<dbReference type="PIR" id="A27082">
    <property type="entry name" value="A27082"/>
</dbReference>
<dbReference type="RefSeq" id="WP_011178399.1">
    <property type="nucleotide sequence ID" value="NZ_AY365053.1"/>
</dbReference>
<dbReference type="SMR" id="P10088"/>
<dbReference type="GeneID" id="55536829"/>
<dbReference type="KEGG" id="reu:Reut_D6479"/>
<dbReference type="HOGENOM" id="CLU_036005_2_0_4"/>
<dbReference type="OrthoDB" id="581608at2"/>
<dbReference type="BioCyc" id="MetaCyc:MONOMER-14384"/>
<dbReference type="UniPathway" id="UPA00685"/>
<dbReference type="GO" id="GO:0018602">
    <property type="term" value="F:2,4-dichlorophenoxyacetate alpha-ketoglutarate dioxygenase activity"/>
    <property type="evidence" value="ECO:0007669"/>
    <property type="project" value="RHEA"/>
</dbReference>
<dbReference type="GO" id="GO:0031418">
    <property type="term" value="F:L-ascorbic acid binding"/>
    <property type="evidence" value="ECO:0007669"/>
    <property type="project" value="UniProtKB-KW"/>
</dbReference>
<dbReference type="GO" id="GO:0046872">
    <property type="term" value="F:metal ion binding"/>
    <property type="evidence" value="ECO:0007669"/>
    <property type="project" value="UniProtKB-KW"/>
</dbReference>
<dbReference type="GO" id="GO:0046300">
    <property type="term" value="P:2,4-dichlorophenoxyacetic acid catabolic process"/>
    <property type="evidence" value="ECO:0007669"/>
    <property type="project" value="UniProtKB-UniPathway"/>
</dbReference>
<dbReference type="Gene3D" id="3.60.130.10">
    <property type="entry name" value="Clavaminate synthase-like"/>
    <property type="match status" value="1"/>
</dbReference>
<dbReference type="InterPro" id="IPR042098">
    <property type="entry name" value="TauD-like_sf"/>
</dbReference>
<dbReference type="InterPro" id="IPR003819">
    <property type="entry name" value="TauD/TfdA-like"/>
</dbReference>
<dbReference type="InterPro" id="IPR051178">
    <property type="entry name" value="TfdA_dioxygenase"/>
</dbReference>
<dbReference type="PANTHER" id="PTHR43779:SF3">
    <property type="entry name" value="(3R)-3-[(CARBOXYMETHYL)AMINO]FATTY ACID OXYGENASE_DECARBOXYLASE"/>
    <property type="match status" value="1"/>
</dbReference>
<dbReference type="PANTHER" id="PTHR43779">
    <property type="entry name" value="DIOXYGENASE RV0097-RELATED"/>
    <property type="match status" value="1"/>
</dbReference>
<dbReference type="Pfam" id="PF02668">
    <property type="entry name" value="TauD"/>
    <property type="match status" value="1"/>
</dbReference>
<dbReference type="SUPFAM" id="SSF51197">
    <property type="entry name" value="Clavaminate synthase-like"/>
    <property type="match status" value="1"/>
</dbReference>
<feature type="chain" id="PRO_0000194017" description="Alpha-ketoglutarate-dependent 2,4-dichlorophenoxyacetate dioxygenase">
    <location>
        <begin position="1"/>
        <end position="287"/>
    </location>
</feature>
<feature type="binding site" evidence="4">
    <location>
        <position position="114"/>
    </location>
    <ligand>
        <name>Fe cation</name>
        <dbReference type="ChEBI" id="CHEBI:24875"/>
        <note>catalytic</note>
    </ligand>
</feature>
<feature type="binding site" evidence="4">
    <location>
        <position position="116"/>
    </location>
    <ligand>
        <name>Fe cation</name>
        <dbReference type="ChEBI" id="CHEBI:24875"/>
        <note>catalytic</note>
    </ligand>
</feature>
<feature type="binding site" evidence="1">
    <location>
        <position position="141"/>
    </location>
    <ligand>
        <name>2-oxoglutarate</name>
        <dbReference type="ChEBI" id="CHEBI:16810"/>
    </ligand>
</feature>
<feature type="binding site" evidence="1">
    <location>
        <position position="248"/>
    </location>
    <ligand>
        <name>2-oxoglutarate</name>
        <dbReference type="ChEBI" id="CHEBI:16810"/>
    </ligand>
</feature>
<feature type="binding site" evidence="4">
    <location>
        <position position="263"/>
    </location>
    <ligand>
        <name>Fe cation</name>
        <dbReference type="ChEBI" id="CHEBI:24875"/>
        <note>catalytic</note>
    </ligand>
</feature>
<feature type="binding site" evidence="1">
    <location>
        <position position="274"/>
    </location>
    <ligand>
        <name>2-oxoglutarate</name>
        <dbReference type="ChEBI" id="CHEBI:16810"/>
    </ligand>
</feature>
<feature type="binding site" evidence="1">
    <location>
        <position position="278"/>
    </location>
    <ligand>
        <name>2-oxoglutarate</name>
        <dbReference type="ChEBI" id="CHEBI:16810"/>
    </ligand>
</feature>
<feature type="modified residue" description="3-hydroxytryptophan; by autocatalysis" evidence="3">
    <location>
        <position position="113"/>
    </location>
</feature>
<feature type="mutagenesis site" description="No change in activity and substrate affinity." evidence="2">
    <original>H</original>
    <variation>A</variation>
    <location>
        <position position="9"/>
    </location>
</feature>
<feature type="mutagenesis site" description="Loss of activity." evidence="2">
    <original>H</original>
    <variation>A</variation>
    <location>
        <position position="114"/>
    </location>
</feature>
<feature type="mutagenesis site" description="Loss of activity." evidence="2">
    <original>D</original>
    <variation>A</variation>
    <location>
        <position position="116"/>
    </location>
</feature>
<feature type="mutagenesis site" description="Loss of activity." evidence="2">
    <original>H</original>
    <variation>A</variation>
    <location>
        <position position="168"/>
    </location>
</feature>
<feature type="mutagenesis site" description="Loss of activity." evidence="2">
    <original>H</original>
    <variation>A</variation>
    <location>
        <position position="201"/>
    </location>
</feature>
<feature type="mutagenesis site" description="10-fold decrease in affinity for 2,4-D and highly reduced activity." evidence="2">
    <original>H</original>
    <variation>A</variation>
    <location>
        <position position="214"/>
    </location>
</feature>
<feature type="mutagenesis site" description="2.5-fold decrease in affinity for 2,4-D but no change in activity." evidence="2">
    <original>H</original>
    <variation>A</variation>
    <location>
        <position position="217"/>
    </location>
</feature>
<feature type="mutagenesis site" description="No change in activity and substrate affinity." evidence="2">
    <original>H</original>
    <variation>A</variation>
    <location>
        <position position="236"/>
    </location>
</feature>
<feature type="mutagenesis site" description="Loss of activity." evidence="2">
    <original>H</original>
    <variation>A</variation>
    <location>
        <position position="246"/>
    </location>
</feature>
<feature type="mutagenesis site" description="Loss of activity." evidence="2">
    <original>H</original>
    <variation>A</variation>
    <location>
        <position position="263"/>
    </location>
</feature>
<gene>
    <name type="primary">tfdA</name>
    <name type="ordered locus">Reut_D6479</name>
</gene>
<proteinExistence type="evidence at protein level"/>
<name>TFDA_CUPPJ</name>
<sequence length="287" mass="32316">MSVVANPLHPLFAAGVEDIDLREALGSTEVREIERLMDEKSVLVFRGQPLSQDQQIAFARNFGPLEGGFIKVNQRPSRFKYAELADISNVSLDGKVAQRDAREVVGNFANQLWHSDSSFQQPAARYSMLSAVVVPPSGGDTEFCDMRAAYDALPRDLQSELEGLRAEHYALNSRFLLGDTDYSEAQRNAMPPVNWPLVRTHAGSGRKFLFIGAHASHVEGLPVAEGRMLLAELLEHATQREFVYRHRWNVGDLVMWDNRCVLHRGRRYDISARRELRRATTLDDAVV</sequence>
<evidence type="ECO:0000250" key="1"/>
<evidence type="ECO:0000269" key="2">
    <source>
    </source>
</evidence>
<evidence type="ECO:0000269" key="3">
    <source>
    </source>
</evidence>
<evidence type="ECO:0000305" key="4"/>